<dbReference type="EC" id="1.9.6.1" evidence="1"/>
<dbReference type="EMBL" id="CP000644">
    <property type="protein sequence ID" value="ABO90789.1"/>
    <property type="molecule type" value="Genomic_DNA"/>
</dbReference>
<dbReference type="RefSeq" id="WP_005309877.1">
    <property type="nucleotide sequence ID" value="NC_009348.1"/>
</dbReference>
<dbReference type="SMR" id="A4SPG7"/>
<dbReference type="STRING" id="29491.GCA_000820065_00040"/>
<dbReference type="KEGG" id="asa:ASA_2771"/>
<dbReference type="eggNOG" id="COG0243">
    <property type="taxonomic scope" value="Bacteria"/>
</dbReference>
<dbReference type="HOGENOM" id="CLU_000422_13_4_6"/>
<dbReference type="Proteomes" id="UP000000225">
    <property type="component" value="Chromosome"/>
</dbReference>
<dbReference type="GO" id="GO:0016020">
    <property type="term" value="C:membrane"/>
    <property type="evidence" value="ECO:0007669"/>
    <property type="project" value="TreeGrafter"/>
</dbReference>
<dbReference type="GO" id="GO:0009325">
    <property type="term" value="C:nitrate reductase complex"/>
    <property type="evidence" value="ECO:0007669"/>
    <property type="project" value="TreeGrafter"/>
</dbReference>
<dbReference type="GO" id="GO:0042597">
    <property type="term" value="C:periplasmic space"/>
    <property type="evidence" value="ECO:0007669"/>
    <property type="project" value="UniProtKB-SubCell"/>
</dbReference>
<dbReference type="GO" id="GO:0051539">
    <property type="term" value="F:4 iron, 4 sulfur cluster binding"/>
    <property type="evidence" value="ECO:0007669"/>
    <property type="project" value="UniProtKB-KW"/>
</dbReference>
<dbReference type="GO" id="GO:0009055">
    <property type="term" value="F:electron transfer activity"/>
    <property type="evidence" value="ECO:0007669"/>
    <property type="project" value="UniProtKB-UniRule"/>
</dbReference>
<dbReference type="GO" id="GO:0005506">
    <property type="term" value="F:iron ion binding"/>
    <property type="evidence" value="ECO:0007669"/>
    <property type="project" value="UniProtKB-UniRule"/>
</dbReference>
<dbReference type="GO" id="GO:0030151">
    <property type="term" value="F:molybdenum ion binding"/>
    <property type="evidence" value="ECO:0007669"/>
    <property type="project" value="InterPro"/>
</dbReference>
<dbReference type="GO" id="GO:0043546">
    <property type="term" value="F:molybdopterin cofactor binding"/>
    <property type="evidence" value="ECO:0007669"/>
    <property type="project" value="InterPro"/>
</dbReference>
<dbReference type="GO" id="GO:0050140">
    <property type="term" value="F:nitrate reductase (cytochrome) activity"/>
    <property type="evidence" value="ECO:0007669"/>
    <property type="project" value="UniProtKB-EC"/>
</dbReference>
<dbReference type="GO" id="GO:0045333">
    <property type="term" value="P:cellular respiration"/>
    <property type="evidence" value="ECO:0007669"/>
    <property type="project" value="UniProtKB-ARBA"/>
</dbReference>
<dbReference type="GO" id="GO:0006777">
    <property type="term" value="P:Mo-molybdopterin cofactor biosynthetic process"/>
    <property type="evidence" value="ECO:0007669"/>
    <property type="project" value="UniProtKB-UniRule"/>
</dbReference>
<dbReference type="GO" id="GO:0042128">
    <property type="term" value="P:nitrate assimilation"/>
    <property type="evidence" value="ECO:0007669"/>
    <property type="project" value="UniProtKB-UniRule"/>
</dbReference>
<dbReference type="CDD" id="cd02791">
    <property type="entry name" value="MopB_CT_Nitrate-R-NapA-like"/>
    <property type="match status" value="1"/>
</dbReference>
<dbReference type="CDD" id="cd02754">
    <property type="entry name" value="MopB_Nitrate-R-NapA-like"/>
    <property type="match status" value="1"/>
</dbReference>
<dbReference type="FunFam" id="2.40.40.20:FF:000005">
    <property type="entry name" value="Periplasmic nitrate reductase"/>
    <property type="match status" value="1"/>
</dbReference>
<dbReference type="Gene3D" id="2.40.40.20">
    <property type="match status" value="1"/>
</dbReference>
<dbReference type="Gene3D" id="3.30.200.210">
    <property type="match status" value="1"/>
</dbReference>
<dbReference type="Gene3D" id="3.40.50.740">
    <property type="match status" value="1"/>
</dbReference>
<dbReference type="Gene3D" id="3.40.228.10">
    <property type="entry name" value="Dimethylsulfoxide Reductase, domain 2"/>
    <property type="match status" value="1"/>
</dbReference>
<dbReference type="HAMAP" id="MF_01630">
    <property type="entry name" value="Nitrate_reduct_NapA"/>
    <property type="match status" value="1"/>
</dbReference>
<dbReference type="InterPro" id="IPR009010">
    <property type="entry name" value="Asp_de-COase-like_dom_sf"/>
</dbReference>
<dbReference type="InterPro" id="IPR041957">
    <property type="entry name" value="CT_Nitrate-R-NapA-like"/>
</dbReference>
<dbReference type="InterPro" id="IPR006657">
    <property type="entry name" value="MoPterin_dinucl-bd_dom"/>
</dbReference>
<dbReference type="InterPro" id="IPR006656">
    <property type="entry name" value="Mopterin_OxRdtase"/>
</dbReference>
<dbReference type="InterPro" id="IPR006963">
    <property type="entry name" value="Mopterin_OxRdtase_4Fe-4S_dom"/>
</dbReference>
<dbReference type="InterPro" id="IPR027467">
    <property type="entry name" value="MopterinOxRdtase_cofactor_BS"/>
</dbReference>
<dbReference type="InterPro" id="IPR010051">
    <property type="entry name" value="Periplasm_NO3_reductase_lsu"/>
</dbReference>
<dbReference type="InterPro" id="IPR050123">
    <property type="entry name" value="Prok_molybdopt-oxidoreductase"/>
</dbReference>
<dbReference type="InterPro" id="IPR006311">
    <property type="entry name" value="TAT_signal"/>
</dbReference>
<dbReference type="InterPro" id="IPR019546">
    <property type="entry name" value="TAT_signal_bac_arc"/>
</dbReference>
<dbReference type="NCBIfam" id="TIGR01706">
    <property type="entry name" value="NAPA"/>
    <property type="match status" value="1"/>
</dbReference>
<dbReference type="NCBIfam" id="NF010055">
    <property type="entry name" value="PRK13532.1"/>
    <property type="match status" value="1"/>
</dbReference>
<dbReference type="NCBIfam" id="TIGR01409">
    <property type="entry name" value="TAT_signal_seq"/>
    <property type="match status" value="1"/>
</dbReference>
<dbReference type="PANTHER" id="PTHR43105:SF11">
    <property type="entry name" value="PERIPLASMIC NITRATE REDUCTASE"/>
    <property type="match status" value="1"/>
</dbReference>
<dbReference type="PANTHER" id="PTHR43105">
    <property type="entry name" value="RESPIRATORY NITRATE REDUCTASE"/>
    <property type="match status" value="1"/>
</dbReference>
<dbReference type="Pfam" id="PF04879">
    <property type="entry name" value="Molybdop_Fe4S4"/>
    <property type="match status" value="1"/>
</dbReference>
<dbReference type="Pfam" id="PF00384">
    <property type="entry name" value="Molybdopterin"/>
    <property type="match status" value="1"/>
</dbReference>
<dbReference type="Pfam" id="PF01568">
    <property type="entry name" value="Molydop_binding"/>
    <property type="match status" value="1"/>
</dbReference>
<dbReference type="SMART" id="SM00926">
    <property type="entry name" value="Molybdop_Fe4S4"/>
    <property type="match status" value="1"/>
</dbReference>
<dbReference type="SUPFAM" id="SSF50692">
    <property type="entry name" value="ADC-like"/>
    <property type="match status" value="1"/>
</dbReference>
<dbReference type="SUPFAM" id="SSF53706">
    <property type="entry name" value="Formate dehydrogenase/DMSO reductase, domains 1-3"/>
    <property type="match status" value="1"/>
</dbReference>
<dbReference type="PROSITE" id="PS51669">
    <property type="entry name" value="4FE4S_MOW_BIS_MGD"/>
    <property type="match status" value="1"/>
</dbReference>
<dbReference type="PROSITE" id="PS00551">
    <property type="entry name" value="MOLYBDOPTERIN_PROK_1"/>
    <property type="match status" value="1"/>
</dbReference>
<dbReference type="PROSITE" id="PS51318">
    <property type="entry name" value="TAT"/>
    <property type="match status" value="1"/>
</dbReference>
<sequence>MKLSRRDFMKANAVAAAAAVAGVSAPTLAANLITSTDKTAIKWDKAPCRFCGTGCSVLVGSQDGRVVATQGDPDAPVNRGLNCIKGYFLSKIMYGEDRLTQPMLRMTNGKFDKNGDFAPVSWDQAFDIMAEKFKATLKEKGPTAVGMFGSGQWTVWEGYAAAKLMKAGFRTNNLDPNARHCMASAVVGFMRTFGMDEPMGCYDDIEQADAFVLWGSNMAEMHPILWSRMSDRRLSNPDVQVHVLSTFEHRSFELADNGMVFTPQTDLAILNYVANYIIQNDKVNWEFVNKHTQFRKGTTDIGYGLRPTHPTEARAKNPGNGDATPMSFDDFAKFVADYDLESVSKLSGVSKEKLEKLAQLYADPSKKVVSYWTMGFNQHTRGVWANNLCYNIHLLTGKISTPGSGPFSLTGQPSACGTAREVGTFAHRLPADMVVTDPKHRAIAEKIWKLPEGTIPEQVGYHAVLQNRMLKDGKLNAYWVMCNNNMQAGPNMNEEALPGYRNPANFIVVSDPYPTVTAQAADLILPTAMWVEKEGAYGNAERRTQFWHQQVKPPEGAKSDLWQLMEFAKRFKVEEVWPAELIAKQPELKGKTLFDVLYANGQVDQFPKEQSKGEFNDESESFGFYVQKGLFEEYATFGRGHGHDLAPFDQYHEARGLRWPVVDGKETLWRYREGFDPYVKAGEGVRFYGKPDGRAVIFALPYEPAAEAPDKEYDMWLSTGRVLEHWHTGTMTRRVPELYRAFPDAVLFMHPEDAKARGVRRGEEVIVSSRRGEVKTRVETRGRNRPPKGLVFMPFFDASQLVNKLTLDATDPLSKETDYKKCAVKVVKA</sequence>
<name>NAPA_AERS4</name>
<accession>A4SPG7</accession>
<keyword id="KW-0004">4Fe-4S</keyword>
<keyword id="KW-0249">Electron transport</keyword>
<keyword id="KW-0408">Iron</keyword>
<keyword id="KW-0411">Iron-sulfur</keyword>
<keyword id="KW-0479">Metal-binding</keyword>
<keyword id="KW-0500">Molybdenum</keyword>
<keyword id="KW-0534">Nitrate assimilation</keyword>
<keyword id="KW-0560">Oxidoreductase</keyword>
<keyword id="KW-0574">Periplasm</keyword>
<keyword id="KW-0732">Signal</keyword>
<keyword id="KW-0813">Transport</keyword>
<comment type="function">
    <text evidence="1">Catalytic subunit of the periplasmic nitrate reductase complex NapAB. Receives electrons from NapB and catalyzes the reduction of nitrate to nitrite.</text>
</comment>
<comment type="catalytic activity">
    <reaction evidence="1">
        <text>2 Fe(II)-[cytochrome] + nitrate + 2 H(+) = 2 Fe(III)-[cytochrome] + nitrite + H2O</text>
        <dbReference type="Rhea" id="RHEA:12909"/>
        <dbReference type="Rhea" id="RHEA-COMP:11777"/>
        <dbReference type="Rhea" id="RHEA-COMP:11778"/>
        <dbReference type="ChEBI" id="CHEBI:15377"/>
        <dbReference type="ChEBI" id="CHEBI:15378"/>
        <dbReference type="ChEBI" id="CHEBI:16301"/>
        <dbReference type="ChEBI" id="CHEBI:17632"/>
        <dbReference type="ChEBI" id="CHEBI:29033"/>
        <dbReference type="ChEBI" id="CHEBI:29034"/>
        <dbReference type="EC" id="1.9.6.1"/>
    </reaction>
</comment>
<comment type="cofactor">
    <cofactor evidence="1">
        <name>[4Fe-4S] cluster</name>
        <dbReference type="ChEBI" id="CHEBI:49883"/>
    </cofactor>
    <text evidence="1">Binds 1 [4Fe-4S] cluster.</text>
</comment>
<comment type="cofactor">
    <cofactor evidence="1">
        <name>Mo-bis(molybdopterin guanine dinucleotide)</name>
        <dbReference type="ChEBI" id="CHEBI:60539"/>
    </cofactor>
    <text evidence="1">Binds 1 molybdenum-bis(molybdopterin guanine dinucleotide) (Mo-bis-MGD) cofactor per subunit.</text>
</comment>
<comment type="subunit">
    <text evidence="1">Component of the periplasmic nitrate reductase NapAB complex composed of NapA and NapB.</text>
</comment>
<comment type="subcellular location">
    <subcellularLocation>
        <location evidence="1">Periplasm</location>
    </subcellularLocation>
</comment>
<comment type="PTM">
    <text evidence="1">Predicted to be exported by the Tat system. The position of the signal peptide cleavage has not been experimentally proven.</text>
</comment>
<comment type="similarity">
    <text evidence="1">Belongs to the prokaryotic molybdopterin-containing oxidoreductase family. NasA/NapA/NarB subfamily.</text>
</comment>
<reference key="1">
    <citation type="journal article" date="2008" name="BMC Genomics">
        <title>The genome of Aeromonas salmonicida subsp. salmonicida A449: insights into the evolution of a fish pathogen.</title>
        <authorList>
            <person name="Reith M.E."/>
            <person name="Singh R.K."/>
            <person name="Curtis B."/>
            <person name="Boyd J.M."/>
            <person name="Bouevitch A."/>
            <person name="Kimball J."/>
            <person name="Munholland J."/>
            <person name="Murphy C."/>
            <person name="Sarty D."/>
            <person name="Williams J."/>
            <person name="Nash J.H."/>
            <person name="Johnson S.C."/>
            <person name="Brown L.L."/>
        </authorList>
    </citation>
    <scope>NUCLEOTIDE SEQUENCE [LARGE SCALE GENOMIC DNA]</scope>
    <source>
        <strain>A449</strain>
    </source>
</reference>
<proteinExistence type="inferred from homology"/>
<feature type="signal peptide" description="Tat-type signal" evidence="1">
    <location>
        <begin position="1"/>
        <end position="30"/>
    </location>
</feature>
<feature type="chain" id="PRO_1000069708" description="Periplasmic nitrate reductase" evidence="1">
    <location>
        <begin position="31"/>
        <end position="829"/>
    </location>
</feature>
<feature type="domain" description="4Fe-4S Mo/W bis-MGD-type" evidence="1">
    <location>
        <begin position="41"/>
        <end position="97"/>
    </location>
</feature>
<feature type="binding site" evidence="1">
    <location>
        <position position="48"/>
    </location>
    <ligand>
        <name>[4Fe-4S] cluster</name>
        <dbReference type="ChEBI" id="CHEBI:49883"/>
    </ligand>
</feature>
<feature type="binding site" evidence="1">
    <location>
        <position position="51"/>
    </location>
    <ligand>
        <name>[4Fe-4S] cluster</name>
        <dbReference type="ChEBI" id="CHEBI:49883"/>
    </ligand>
</feature>
<feature type="binding site" evidence="1">
    <location>
        <position position="55"/>
    </location>
    <ligand>
        <name>[4Fe-4S] cluster</name>
        <dbReference type="ChEBI" id="CHEBI:49883"/>
    </ligand>
</feature>
<feature type="binding site" evidence="1">
    <location>
        <position position="83"/>
    </location>
    <ligand>
        <name>[4Fe-4S] cluster</name>
        <dbReference type="ChEBI" id="CHEBI:49883"/>
    </ligand>
</feature>
<feature type="binding site" evidence="1">
    <location>
        <position position="85"/>
    </location>
    <ligand>
        <name>Mo-bis(molybdopterin guanine dinucleotide)</name>
        <dbReference type="ChEBI" id="CHEBI:60539"/>
    </ligand>
</feature>
<feature type="binding site" evidence="1">
    <location>
        <position position="152"/>
    </location>
    <ligand>
        <name>Mo-bis(molybdopterin guanine dinucleotide)</name>
        <dbReference type="ChEBI" id="CHEBI:60539"/>
    </ligand>
</feature>
<feature type="binding site" evidence="1">
    <location>
        <position position="177"/>
    </location>
    <ligand>
        <name>Mo-bis(molybdopterin guanine dinucleotide)</name>
        <dbReference type="ChEBI" id="CHEBI:60539"/>
    </ligand>
</feature>
<feature type="binding site" evidence="1">
    <location>
        <position position="181"/>
    </location>
    <ligand>
        <name>Mo-bis(molybdopterin guanine dinucleotide)</name>
        <dbReference type="ChEBI" id="CHEBI:60539"/>
    </ligand>
</feature>
<feature type="binding site" evidence="1">
    <location>
        <begin position="214"/>
        <end position="221"/>
    </location>
    <ligand>
        <name>Mo-bis(molybdopterin guanine dinucleotide)</name>
        <dbReference type="ChEBI" id="CHEBI:60539"/>
    </ligand>
</feature>
<feature type="binding site" evidence="1">
    <location>
        <begin position="245"/>
        <end position="249"/>
    </location>
    <ligand>
        <name>Mo-bis(molybdopterin guanine dinucleotide)</name>
        <dbReference type="ChEBI" id="CHEBI:60539"/>
    </ligand>
</feature>
<feature type="binding site" evidence="1">
    <location>
        <begin position="264"/>
        <end position="266"/>
    </location>
    <ligand>
        <name>Mo-bis(molybdopterin guanine dinucleotide)</name>
        <dbReference type="ChEBI" id="CHEBI:60539"/>
    </ligand>
</feature>
<feature type="binding site" evidence="1">
    <location>
        <position position="374"/>
    </location>
    <ligand>
        <name>Mo-bis(molybdopterin guanine dinucleotide)</name>
        <dbReference type="ChEBI" id="CHEBI:60539"/>
    </ligand>
</feature>
<feature type="binding site" evidence="1">
    <location>
        <position position="378"/>
    </location>
    <ligand>
        <name>Mo-bis(molybdopterin guanine dinucleotide)</name>
        <dbReference type="ChEBI" id="CHEBI:60539"/>
    </ligand>
</feature>
<feature type="binding site" evidence="1">
    <location>
        <position position="484"/>
    </location>
    <ligand>
        <name>Mo-bis(molybdopterin guanine dinucleotide)</name>
        <dbReference type="ChEBI" id="CHEBI:60539"/>
    </ligand>
</feature>
<feature type="binding site" evidence="1">
    <location>
        <begin position="510"/>
        <end position="511"/>
    </location>
    <ligand>
        <name>Mo-bis(molybdopterin guanine dinucleotide)</name>
        <dbReference type="ChEBI" id="CHEBI:60539"/>
    </ligand>
</feature>
<feature type="binding site" evidence="1">
    <location>
        <position position="533"/>
    </location>
    <ligand>
        <name>Mo-bis(molybdopterin guanine dinucleotide)</name>
        <dbReference type="ChEBI" id="CHEBI:60539"/>
    </ligand>
</feature>
<feature type="binding site" evidence="1">
    <location>
        <position position="560"/>
    </location>
    <ligand>
        <name>Mo-bis(molybdopterin guanine dinucleotide)</name>
        <dbReference type="ChEBI" id="CHEBI:60539"/>
    </ligand>
</feature>
<feature type="binding site" evidence="1">
    <location>
        <begin position="719"/>
        <end position="728"/>
    </location>
    <ligand>
        <name>Mo-bis(molybdopterin guanine dinucleotide)</name>
        <dbReference type="ChEBI" id="CHEBI:60539"/>
    </ligand>
</feature>
<feature type="binding site" evidence="1">
    <location>
        <position position="795"/>
    </location>
    <ligand>
        <name>substrate</name>
    </ligand>
</feature>
<feature type="binding site" evidence="1">
    <location>
        <position position="803"/>
    </location>
    <ligand>
        <name>Mo-bis(molybdopterin guanine dinucleotide)</name>
        <dbReference type="ChEBI" id="CHEBI:60539"/>
    </ligand>
</feature>
<feature type="binding site" evidence="1">
    <location>
        <position position="820"/>
    </location>
    <ligand>
        <name>Mo-bis(molybdopterin guanine dinucleotide)</name>
        <dbReference type="ChEBI" id="CHEBI:60539"/>
    </ligand>
</feature>
<organism>
    <name type="scientific">Aeromonas salmonicida (strain A449)</name>
    <dbReference type="NCBI Taxonomy" id="382245"/>
    <lineage>
        <taxon>Bacteria</taxon>
        <taxon>Pseudomonadati</taxon>
        <taxon>Pseudomonadota</taxon>
        <taxon>Gammaproteobacteria</taxon>
        <taxon>Aeromonadales</taxon>
        <taxon>Aeromonadaceae</taxon>
        <taxon>Aeromonas</taxon>
    </lineage>
</organism>
<protein>
    <recommendedName>
        <fullName evidence="1">Periplasmic nitrate reductase</fullName>
        <ecNumber evidence="1">1.9.6.1</ecNumber>
    </recommendedName>
</protein>
<gene>
    <name evidence="1" type="primary">napA</name>
    <name type="ordered locus">ASA_2771</name>
</gene>
<evidence type="ECO:0000255" key="1">
    <source>
        <dbReference type="HAMAP-Rule" id="MF_01630"/>
    </source>
</evidence>